<sequence>MSELSYLEKLMDGVEVEWLPLSKVFNLRNGYTPSKTKKEFWANGDIPWFRMDDIRENGRILGSSLQKISSCAVKGGKLFPENSILISTSATIGEHALITVPHLANQRFTCLALKESYADCFDIKFLFYYCFSLAEWCRKNTTMSSFASVDMDGFKKFLIPRPCPDNPEKSLAIQSEIVRILDKFSALTAELTAELTAELSMRKKQYNYYRDQLLSFKEDEVEGKRKTLGEIMKMRAGQHISAHNIIERKEESYIYPCFGGNGIRGYVKEKSHDGEHLLIGRQGALCGNVQRMKGQFYATEHAVVVSVMPGINIDWAFHMLTAMNLNQYASKSAQPGLAVGKLQELKLFVPSIERQIYIAAILDKFDTLTNSITEVSRVKSSCARNSTNIIEICYLVSRSRK</sequence>
<gene>
    <name type="primary">prrB</name>
    <name evidence="3" type="synonym">orfB</name>
</gene>
<accession>P17222</accession>
<name>T1SP_ECOLX</name>
<feature type="chain" id="PRO_0000198037" description="Type I restriction enzyme EcoprrI specificity subunit">
    <location>
        <begin position="1"/>
        <end position="401"/>
    </location>
</feature>
<dbReference type="EMBL" id="X52284">
    <property type="protein sequence ID" value="CAA36526.1"/>
    <property type="molecule type" value="Genomic_DNA"/>
</dbReference>
<dbReference type="PIR" id="S09626">
    <property type="entry name" value="S09626"/>
</dbReference>
<dbReference type="SMR" id="P17222"/>
<dbReference type="REBASE" id="3733">
    <property type="entry name" value="S.EcoprrI"/>
</dbReference>
<dbReference type="PRO" id="PR:P17222"/>
<dbReference type="GO" id="GO:0003677">
    <property type="term" value="F:DNA binding"/>
    <property type="evidence" value="ECO:0007669"/>
    <property type="project" value="UniProtKB-KW"/>
</dbReference>
<dbReference type="GO" id="GO:0009307">
    <property type="term" value="P:DNA restriction-modification system"/>
    <property type="evidence" value="ECO:0007669"/>
    <property type="project" value="UniProtKB-KW"/>
</dbReference>
<dbReference type="CDD" id="cd17281">
    <property type="entry name" value="RMtype1_S_HpyAXIII_TRD1-CR1_like"/>
    <property type="match status" value="1"/>
</dbReference>
<dbReference type="CDD" id="cd17266">
    <property type="entry name" value="RMtype1_S_Sau1132ORF3780P-TRD2-CR2_like"/>
    <property type="match status" value="1"/>
</dbReference>
<dbReference type="Gene3D" id="3.90.220.20">
    <property type="entry name" value="DNA methylase specificity domains"/>
    <property type="match status" value="2"/>
</dbReference>
<dbReference type="InterPro" id="IPR000055">
    <property type="entry name" value="Restrct_endonuc_typeI_TRD"/>
</dbReference>
<dbReference type="InterPro" id="IPR044946">
    <property type="entry name" value="Restrct_endonuc_typeI_TRD_sf"/>
</dbReference>
<dbReference type="InterPro" id="IPR051212">
    <property type="entry name" value="Type-I_RE_S_subunit"/>
</dbReference>
<dbReference type="PANTHER" id="PTHR43140:SF1">
    <property type="entry name" value="TYPE I RESTRICTION ENZYME ECOKI SPECIFICITY SUBUNIT"/>
    <property type="match status" value="1"/>
</dbReference>
<dbReference type="PANTHER" id="PTHR43140">
    <property type="entry name" value="TYPE-1 RESTRICTION ENZYME ECOKI SPECIFICITY PROTEIN"/>
    <property type="match status" value="1"/>
</dbReference>
<dbReference type="Pfam" id="PF01420">
    <property type="entry name" value="Methylase_S"/>
    <property type="match status" value="2"/>
</dbReference>
<dbReference type="SUPFAM" id="SSF116734">
    <property type="entry name" value="DNA methylase specificity domain"/>
    <property type="match status" value="2"/>
</dbReference>
<protein>
    <recommendedName>
        <fullName evidence="4">Type I restriction enzyme EcoprrI specificity subunit</fullName>
        <shortName>S protein</shortName>
    </recommendedName>
    <alternativeName>
        <fullName evidence="2">Type I specificity subunit S.EcoprrI</fullName>
        <shortName evidence="2">S.EcoprrI</shortName>
    </alternativeName>
    <alternativeName>
        <fullName>Type-1 restriction enzyme EcoprrI specificity subunit</fullName>
    </alternativeName>
</protein>
<proteinExistence type="inferred from homology"/>
<comment type="function">
    <text evidence="1 2">The specificity (S) subunit of a type I restriction enzyme; this subunit dictates DNA sequence specificity. The M and S subunits together form a methyltransferase (MTase) that methylates two adenine residues of the sequence 5'-CCAN(7)ATGC-3'. In the presence of the R subunit the complex can also act as an endonuclease, binding to the same target sequence but cutting the DNA some distance from this site. Whether the DNA is cut or modified depends on the methylation state of the target sequence. When the target site is unmodified, the DNA is cut. When the target site is hemimethylated, the complex acts as a maintenance MTase modifying the DNA so that both strands become methylated. After locating a non-methylated recognition site, the enzyme complex serves as a molecular motor that translocates DNA in an ATP-dependent manner until a collision occurs that triggers cleavage.</text>
</comment>
<comment type="subunit">
    <text evidence="1">The type I restriction/modification system is composed of three polypeptides R, M and S; the restriction enzyme has stoichiometry R(2)M(2)S(1) while the methyltransferase is M(2)S(1).</text>
</comment>
<comment type="domain">
    <text evidence="1">Contains two DNA recognition domains, each specifying recognition of one of the two defined components of the target sequence.</text>
</comment>
<comment type="miscellaneous">
    <text evidence="1">Type I restriction and modification enzymes are complex, multifunctional systems which require ATP, S-adenosyl methionine and Mg(2+) as cofactors and, in addition to their endonucleolytic and methylase activities, are potent DNA-dependent ATPases.</text>
</comment>
<comment type="similarity">
    <text evidence="4">Belongs to the type-I restriction system S methylase family.</text>
</comment>
<organism>
    <name type="scientific">Escherichia coli</name>
    <dbReference type="NCBI Taxonomy" id="562"/>
    <lineage>
        <taxon>Bacteria</taxon>
        <taxon>Pseudomonadati</taxon>
        <taxon>Pseudomonadota</taxon>
        <taxon>Gammaproteobacteria</taxon>
        <taxon>Enterobacterales</taxon>
        <taxon>Enterobacteriaceae</taxon>
        <taxon>Escherichia</taxon>
    </lineage>
</organism>
<keyword id="KW-0238">DNA-binding</keyword>
<keyword id="KW-0680">Restriction system</keyword>
<evidence type="ECO:0000250" key="1">
    <source>
        <dbReference type="UniProtKB" id="P05719"/>
    </source>
</evidence>
<evidence type="ECO:0000303" key="2">
    <source>
    </source>
</evidence>
<evidence type="ECO:0000303" key="3">
    <source>
    </source>
</evidence>
<evidence type="ECO:0000305" key="4"/>
<reference key="1">
    <citation type="journal article" date="1990" name="EMBO J.">
        <title>The optional E. coli prr locus encodes a latent form of phage T4-induced anticodon nuclease.</title>
        <authorList>
            <person name="Levitz R."/>
            <person name="Chapman D."/>
            <person name="Amitsur M."/>
            <person name="Green R."/>
            <person name="Snyder L."/>
            <person name="Kaufmann G."/>
        </authorList>
    </citation>
    <scope>NUCLEOTIDE SEQUENCE [GENOMIC DNA]</scope>
    <source>
        <strain>CTR5X</strain>
    </source>
</reference>
<reference key="2">
    <citation type="journal article" date="2003" name="Nucleic Acids Res.">
        <title>A nomenclature for restriction enzymes, DNA methyltransferases, homing endonucleases and their genes.</title>
        <authorList>
            <person name="Roberts R.J."/>
            <person name="Belfort M."/>
            <person name="Bestor T."/>
            <person name="Bhagwat A.S."/>
            <person name="Bickle T.A."/>
            <person name="Bitinaite J."/>
            <person name="Blumenthal R.M."/>
            <person name="Degtyarev S.K."/>
            <person name="Dryden D.T."/>
            <person name="Dybvig K."/>
            <person name="Firman K."/>
            <person name="Gromova E.S."/>
            <person name="Gumport R.I."/>
            <person name="Halford S.E."/>
            <person name="Hattman S."/>
            <person name="Heitman J."/>
            <person name="Hornby D.P."/>
            <person name="Janulaitis A."/>
            <person name="Jeltsch A."/>
            <person name="Josephsen J."/>
            <person name="Kiss A."/>
            <person name="Klaenhammer T.R."/>
            <person name="Kobayashi I."/>
            <person name="Kong H."/>
            <person name="Krueger D.H."/>
            <person name="Lacks S."/>
            <person name="Marinus M.G."/>
            <person name="Miyahara M."/>
            <person name="Morgan R.D."/>
            <person name="Murray N.E."/>
            <person name="Nagaraja V."/>
            <person name="Piekarowicz A."/>
            <person name="Pingoud A."/>
            <person name="Raleigh E."/>
            <person name="Rao D.N."/>
            <person name="Reich N."/>
            <person name="Repin V.E."/>
            <person name="Selker E.U."/>
            <person name="Shaw P.C."/>
            <person name="Stein D.C."/>
            <person name="Stoddard B.L."/>
            <person name="Szybalski W."/>
            <person name="Trautner T.A."/>
            <person name="Van Etten J.L."/>
            <person name="Vitor J.M."/>
            <person name="Wilson G.G."/>
            <person name="Xu S.Y."/>
        </authorList>
    </citation>
    <scope>NOMENCLATURE</scope>
</reference>